<feature type="chain" id="PRO_0000046673" description="NKG2-F type II integral membrane protein">
    <location>
        <begin position="1"/>
        <end position="158"/>
    </location>
</feature>
<feature type="topological domain" description="Cytoplasmic" evidence="1">
    <location>
        <begin position="1"/>
        <end position="74"/>
    </location>
</feature>
<feature type="transmembrane region" description="Helical; Signal-anchor for type II membrane protein" evidence="1">
    <location>
        <begin position="75"/>
        <end position="95"/>
    </location>
</feature>
<feature type="topological domain" description="Extracellular" evidence="1">
    <location>
        <begin position="96"/>
        <end position="158"/>
    </location>
</feature>
<feature type="region of interest" description="Disordered" evidence="2">
    <location>
        <begin position="1"/>
        <end position="25"/>
    </location>
</feature>
<feature type="compositionally biased region" description="Polar residues" evidence="2">
    <location>
        <begin position="1"/>
        <end position="12"/>
    </location>
</feature>
<feature type="sequence variant" id="VAR_013406" description="In allele NKG2-F*02; dbSNP:rs1841958." evidence="3 4 5 6">
    <original>I</original>
    <variation>S</variation>
    <location>
        <position position="29"/>
    </location>
</feature>
<feature type="sequence variant" id="VAR_013407" description="In allele NKG2-F*02; dbSNP:rs2617170." evidence="3 4 5 6">
    <original>N</original>
    <variation>S</variation>
    <location>
        <position position="104"/>
    </location>
</feature>
<comment type="function">
    <text>May play a role as a receptor for the recognition of MHC class I HLA-E molecules by NK cells.</text>
</comment>
<comment type="subunit">
    <text>Can form disulfide-bonded heterodimer with CD94.</text>
</comment>
<comment type="subcellular location">
    <subcellularLocation>
        <location>Membrane</location>
        <topology>Single-pass type II membrane protein</topology>
    </subcellularLocation>
</comment>
<comment type="tissue specificity">
    <text>Natural killer cells.</text>
</comment>
<proteinExistence type="evidence at transcript level"/>
<name>NKG2F_HUMAN</name>
<keyword id="KW-1015">Disulfide bond</keyword>
<keyword id="KW-0472">Membrane</keyword>
<keyword id="KW-0675">Receptor</keyword>
<keyword id="KW-1185">Reference proteome</keyword>
<keyword id="KW-0735">Signal-anchor</keyword>
<keyword id="KW-0812">Transmembrane</keyword>
<keyword id="KW-1133">Transmembrane helix</keyword>
<evidence type="ECO:0000255" key="1"/>
<evidence type="ECO:0000256" key="2">
    <source>
        <dbReference type="SAM" id="MobiDB-lite"/>
    </source>
</evidence>
<evidence type="ECO:0000269" key="3">
    <source>
    </source>
</evidence>
<evidence type="ECO:0000269" key="4">
    <source>
    </source>
</evidence>
<evidence type="ECO:0000269" key="5">
    <source>
    </source>
</evidence>
<evidence type="ECO:0000269" key="6">
    <source>
    </source>
</evidence>
<gene>
    <name type="primary">KLRC4</name>
    <name type="synonym">NKG2F</name>
</gene>
<dbReference type="EMBL" id="U96846">
    <property type="protein sequence ID" value="AAC51910.1"/>
    <property type="molecule type" value="Genomic_DNA"/>
</dbReference>
<dbReference type="EMBL" id="U96845">
    <property type="protein sequence ID" value="AAC51909.1"/>
    <property type="molecule type" value="mRNA"/>
</dbReference>
<dbReference type="EMBL" id="AF027164">
    <property type="protein sequence ID" value="AAC17491.1"/>
    <property type="molecule type" value="Genomic_DNA"/>
</dbReference>
<dbReference type="EMBL" id="AJ001683">
    <property type="protein sequence ID" value="CAA04921.1"/>
    <property type="molecule type" value="mRNA"/>
</dbReference>
<dbReference type="EMBL" id="AJ001686">
    <property type="protein sequence ID" value="CAA04924.1"/>
    <property type="molecule type" value="Genomic_DNA"/>
</dbReference>
<dbReference type="EMBL" id="AF350018">
    <property type="protein sequence ID" value="AAK83805.1"/>
    <property type="molecule type" value="mRNA"/>
</dbReference>
<dbReference type="EMBL" id="AF350019">
    <property type="protein sequence ID" value="AAK83806.1"/>
    <property type="molecule type" value="mRNA"/>
</dbReference>
<dbReference type="EMBL" id="AC022075">
    <property type="status" value="NOT_ANNOTATED_CDS"/>
    <property type="molecule type" value="Genomic_DNA"/>
</dbReference>
<dbReference type="EMBL" id="BC017784">
    <property type="protein sequence ID" value="AAH17784.1"/>
    <property type="molecule type" value="mRNA"/>
</dbReference>
<dbReference type="CCDS" id="CCDS8624.1"/>
<dbReference type="RefSeq" id="NP_038459.1">
    <property type="nucleotide sequence ID" value="NM_013431.2"/>
</dbReference>
<dbReference type="SMR" id="O43908"/>
<dbReference type="BioGRID" id="113903">
    <property type="interactions" value="37"/>
</dbReference>
<dbReference type="FunCoup" id="O43908">
    <property type="interactions" value="76"/>
</dbReference>
<dbReference type="IntAct" id="O43908">
    <property type="interactions" value="35"/>
</dbReference>
<dbReference type="STRING" id="9606.ENSP00000310216"/>
<dbReference type="TCDB" id="1.C.111.1.14">
    <property type="family name" value="the regiiiGama (regiiiGama) family"/>
</dbReference>
<dbReference type="iPTMnet" id="O43908"/>
<dbReference type="PhosphoSitePlus" id="O43908"/>
<dbReference type="BioMuta" id="KLRC4"/>
<dbReference type="MassIVE" id="O43908"/>
<dbReference type="PaxDb" id="9606-ENSP00000310216"/>
<dbReference type="PeptideAtlas" id="O43908"/>
<dbReference type="ProteomicsDB" id="49225"/>
<dbReference type="Antibodypedia" id="23310">
    <property type="antibodies" value="53 antibodies from 18 providers"/>
</dbReference>
<dbReference type="DNASU" id="8302"/>
<dbReference type="Ensembl" id="ENST00000309384.3">
    <property type="protein sequence ID" value="ENSP00000310216.1"/>
    <property type="gene ID" value="ENSG00000183542.7"/>
</dbReference>
<dbReference type="Ensembl" id="ENST00000718241.1">
    <property type="protein sequence ID" value="ENSP00000520686.1"/>
    <property type="gene ID" value="ENSG00000183542.7"/>
</dbReference>
<dbReference type="Ensembl" id="ENST00000718242.1">
    <property type="protein sequence ID" value="ENSP00000520687.1"/>
    <property type="gene ID" value="ENSG00000183542.7"/>
</dbReference>
<dbReference type="GeneID" id="8302"/>
<dbReference type="KEGG" id="hsa:8302"/>
<dbReference type="MANE-Select" id="ENST00000309384.3">
    <property type="protein sequence ID" value="ENSP00000310216.1"/>
    <property type="RefSeq nucleotide sequence ID" value="NM_013431.2"/>
    <property type="RefSeq protein sequence ID" value="NP_038459.1"/>
</dbReference>
<dbReference type="UCSC" id="uc001qye.4">
    <property type="organism name" value="human"/>
</dbReference>
<dbReference type="AGR" id="HGNC:6377"/>
<dbReference type="CTD" id="8302"/>
<dbReference type="DisGeNET" id="8302"/>
<dbReference type="GeneCards" id="KLRC4"/>
<dbReference type="HGNC" id="HGNC:6377">
    <property type="gene designation" value="KLRC4"/>
</dbReference>
<dbReference type="HPA" id="ENSG00000183542">
    <property type="expression patterns" value="Tissue enhanced (lymphoid)"/>
</dbReference>
<dbReference type="MalaCards" id="KLRC4"/>
<dbReference type="MIM" id="602893">
    <property type="type" value="gene"/>
</dbReference>
<dbReference type="neXtProt" id="NX_O43908"/>
<dbReference type="OpenTargets" id="ENSG00000183542"/>
<dbReference type="Orphanet" id="117">
    <property type="disease" value="Behcet disease"/>
</dbReference>
<dbReference type="PharmGKB" id="PA30166"/>
<dbReference type="VEuPathDB" id="HostDB:ENSG00000183542"/>
<dbReference type="eggNOG" id="ENOG502S6IE">
    <property type="taxonomic scope" value="Eukaryota"/>
</dbReference>
<dbReference type="GeneTree" id="ENSGT00940000166632"/>
<dbReference type="HOGENOM" id="CLU_049894_9_4_1"/>
<dbReference type="InParanoid" id="O43908"/>
<dbReference type="OMA" id="HRCGSSQ"/>
<dbReference type="OrthoDB" id="10059571at2759"/>
<dbReference type="PAN-GO" id="O43908">
    <property type="GO annotations" value="5 GO annotations based on evolutionary models"/>
</dbReference>
<dbReference type="PhylomeDB" id="O43908"/>
<dbReference type="PathwayCommons" id="O43908"/>
<dbReference type="SignaLink" id="O43908"/>
<dbReference type="BioGRID-ORCS" id="8302">
    <property type="hits" value="21 hits in 1057 CRISPR screens"/>
</dbReference>
<dbReference type="GeneWiki" id="KLRC4"/>
<dbReference type="GenomeRNAi" id="8302"/>
<dbReference type="Pharos" id="O43908">
    <property type="development level" value="Tbio"/>
</dbReference>
<dbReference type="PRO" id="PR:O43908"/>
<dbReference type="Proteomes" id="UP000005640">
    <property type="component" value="Chromosome 12"/>
</dbReference>
<dbReference type="RNAct" id="O43908">
    <property type="molecule type" value="protein"/>
</dbReference>
<dbReference type="Bgee" id="ENSG00000183542">
    <property type="expression patterns" value="Expressed in granulocyte and 103 other cell types or tissues"/>
</dbReference>
<dbReference type="GO" id="GO:0009897">
    <property type="term" value="C:external side of plasma membrane"/>
    <property type="evidence" value="ECO:0000318"/>
    <property type="project" value="GO_Central"/>
</dbReference>
<dbReference type="GO" id="GO:0004888">
    <property type="term" value="F:transmembrane signaling receptor activity"/>
    <property type="evidence" value="ECO:0000318"/>
    <property type="project" value="GO_Central"/>
</dbReference>
<dbReference type="GO" id="GO:0045954">
    <property type="term" value="P:positive regulation of natural killer cell mediated cytotoxicity"/>
    <property type="evidence" value="ECO:0000318"/>
    <property type="project" value="GO_Central"/>
</dbReference>
<dbReference type="GO" id="GO:0002223">
    <property type="term" value="P:stimulatory C-type lectin receptor signaling pathway"/>
    <property type="evidence" value="ECO:0000318"/>
    <property type="project" value="GO_Central"/>
</dbReference>
<dbReference type="Gene3D" id="3.10.100.10">
    <property type="entry name" value="Mannose-Binding Protein A, subunit A"/>
    <property type="match status" value="1"/>
</dbReference>
<dbReference type="Gene3D" id="1.10.287.770">
    <property type="entry name" value="YojJ-like"/>
    <property type="match status" value="1"/>
</dbReference>
<dbReference type="InterPro" id="IPR016186">
    <property type="entry name" value="C-type_lectin-like/link_sf"/>
</dbReference>
<dbReference type="InterPro" id="IPR016187">
    <property type="entry name" value="CTDL_fold"/>
</dbReference>
<dbReference type="InterPro" id="IPR050919">
    <property type="entry name" value="NKG2/CD94_NK_receptors"/>
</dbReference>
<dbReference type="PANTHER" id="PTHR22800">
    <property type="entry name" value="C-TYPE LECTIN PROTEINS"/>
    <property type="match status" value="1"/>
</dbReference>
<dbReference type="PANTHER" id="PTHR22800:SF185">
    <property type="entry name" value="NKG2-F TYPE II INTEGRAL MEMBRANE PROTEIN"/>
    <property type="match status" value="1"/>
</dbReference>
<dbReference type="SUPFAM" id="SSF56436">
    <property type="entry name" value="C-type lectin-like"/>
    <property type="match status" value="1"/>
</dbReference>
<sequence length="158" mass="18234">MNKQRGTYSEVSLAQDPKRQQRKLKGNKISISGTKQEIFQVELNLQNASSDHQGNDKTYHCKGLLPPPEKLTAEVLGIICIVLMATVLKTIVLIPCIGVLEQNNFSLNRRMQKARHCGHCPEEWITYSNSCYYIGKERRTWEERVCWPVLRRTLICFL</sequence>
<protein>
    <recommendedName>
        <fullName>NKG2-F type II integral membrane protein</fullName>
    </recommendedName>
    <alternativeName>
        <fullName>NK cell receptor F</fullName>
    </alternativeName>
    <alternativeName>
        <fullName>NKG2-F-activating NK receptor</fullName>
    </alternativeName>
</protein>
<organism>
    <name type="scientific">Homo sapiens</name>
    <name type="common">Human</name>
    <dbReference type="NCBI Taxonomy" id="9606"/>
    <lineage>
        <taxon>Eukaryota</taxon>
        <taxon>Metazoa</taxon>
        <taxon>Chordata</taxon>
        <taxon>Craniata</taxon>
        <taxon>Vertebrata</taxon>
        <taxon>Euteleostomi</taxon>
        <taxon>Mammalia</taxon>
        <taxon>Eutheria</taxon>
        <taxon>Euarchontoglires</taxon>
        <taxon>Primates</taxon>
        <taxon>Haplorrhini</taxon>
        <taxon>Catarrhini</taxon>
        <taxon>Hominidae</taxon>
        <taxon>Homo</taxon>
    </lineage>
</organism>
<accession>O43908</accession>
<accession>O60851</accession>
<reference key="1">
    <citation type="journal article" date="1997" name="Eur. J. Immunol.">
        <title>Cloning of NKG2-F, a new member of the NKG2 family of human natural killer cell receptor genes.</title>
        <authorList>
            <person name="Plougastel B."/>
            <person name="Trowsdale J."/>
        </authorList>
    </citation>
    <scope>NUCLEOTIDE SEQUENCE [GENOMIC DNA / MRNA]</scope>
    <scope>VARIANTS SER-29 AND SER-104</scope>
</reference>
<reference key="2">
    <citation type="journal article" date="1998" name="Genomics">
        <title>Sequence analysis of a 62-kb region overlapping the human KLRC cluster of genes.</title>
        <authorList>
            <person name="Plougastel B."/>
            <person name="Trowsdale J."/>
        </authorList>
    </citation>
    <scope>NUCLEOTIDE SEQUENCE [GENOMIC DNA]</scope>
    <scope>VARIANTS SER-29 AND SER-104</scope>
</reference>
<reference key="3">
    <citation type="journal article" date="1998" name="Immunogenetics">
        <title>The genomic organization of NKG2C, E, F, and D receptor genes in the human natural killer gene complex.</title>
        <authorList>
            <person name="Glienke J."/>
            <person name="Sobanov Y."/>
            <person name="Brostjan C."/>
            <person name="Steffens C."/>
            <person name="Nguyen C."/>
            <person name="Lehrach H."/>
            <person name="Hofer E."/>
            <person name="Francis F."/>
        </authorList>
    </citation>
    <scope>NUCLEOTIDE SEQUENCE [GENOMIC DNA / MRNA]</scope>
    <scope>VARIANTS SER-29 AND SER-104</scope>
</reference>
<reference key="4">
    <citation type="journal article" date="2002" name="J. Immunol.">
        <title>Conservation and variation in human and common chimpanzee CD94 and NKG2 genes.</title>
        <authorList>
            <person name="Shum B.P."/>
            <person name="Flodin L.R."/>
            <person name="Muir D.G."/>
            <person name="Rajalingam R."/>
            <person name="Khakoo S.I."/>
            <person name="Cleland S."/>
            <person name="Guethlein L.A."/>
            <person name="Uhrberg M."/>
            <person name="Parham P."/>
        </authorList>
    </citation>
    <scope>NUCLEOTIDE SEQUENCE [MRNA]</scope>
    <scope>VARIANTS SER-29 AND SER-104</scope>
</reference>
<reference key="5">
    <citation type="journal article" date="2006" name="Nature">
        <title>The finished DNA sequence of human chromosome 12.</title>
        <authorList>
            <person name="Scherer S.E."/>
            <person name="Muzny D.M."/>
            <person name="Buhay C.J."/>
            <person name="Chen R."/>
            <person name="Cree A."/>
            <person name="Ding Y."/>
            <person name="Dugan-Rocha S."/>
            <person name="Gill R."/>
            <person name="Gunaratne P."/>
            <person name="Harris R.A."/>
            <person name="Hawes A.C."/>
            <person name="Hernandez J."/>
            <person name="Hodgson A.V."/>
            <person name="Hume J."/>
            <person name="Jackson A."/>
            <person name="Khan Z.M."/>
            <person name="Kovar-Smith C."/>
            <person name="Lewis L.R."/>
            <person name="Lozado R.J."/>
            <person name="Metzker M.L."/>
            <person name="Milosavljevic A."/>
            <person name="Miner G.R."/>
            <person name="Montgomery K.T."/>
            <person name="Morgan M.B."/>
            <person name="Nazareth L.V."/>
            <person name="Scott G."/>
            <person name="Sodergren E."/>
            <person name="Song X.-Z."/>
            <person name="Steffen D."/>
            <person name="Lovering R.C."/>
            <person name="Wheeler D.A."/>
            <person name="Worley K.C."/>
            <person name="Yuan Y."/>
            <person name="Zhang Z."/>
            <person name="Adams C.Q."/>
            <person name="Ansari-Lari M.A."/>
            <person name="Ayele M."/>
            <person name="Brown M.J."/>
            <person name="Chen G."/>
            <person name="Chen Z."/>
            <person name="Clerc-Blankenburg K.P."/>
            <person name="Davis C."/>
            <person name="Delgado O."/>
            <person name="Dinh H.H."/>
            <person name="Draper H."/>
            <person name="Gonzalez-Garay M.L."/>
            <person name="Havlak P."/>
            <person name="Jackson L.R."/>
            <person name="Jacob L.S."/>
            <person name="Kelly S.H."/>
            <person name="Li L."/>
            <person name="Li Z."/>
            <person name="Liu J."/>
            <person name="Liu W."/>
            <person name="Lu J."/>
            <person name="Maheshwari M."/>
            <person name="Nguyen B.-V."/>
            <person name="Okwuonu G.O."/>
            <person name="Pasternak S."/>
            <person name="Perez L.M."/>
            <person name="Plopper F.J.H."/>
            <person name="Santibanez J."/>
            <person name="Shen H."/>
            <person name="Tabor P.E."/>
            <person name="Verduzco D."/>
            <person name="Waldron L."/>
            <person name="Wang Q."/>
            <person name="Williams G.A."/>
            <person name="Zhang J."/>
            <person name="Zhou J."/>
            <person name="Allen C.C."/>
            <person name="Amin A.G."/>
            <person name="Anyalebechi V."/>
            <person name="Bailey M."/>
            <person name="Barbaria J.A."/>
            <person name="Bimage K.E."/>
            <person name="Bryant N.P."/>
            <person name="Burch P.E."/>
            <person name="Burkett C.E."/>
            <person name="Burrell K.L."/>
            <person name="Calderon E."/>
            <person name="Cardenas V."/>
            <person name="Carter K."/>
            <person name="Casias K."/>
            <person name="Cavazos I."/>
            <person name="Cavazos S.R."/>
            <person name="Ceasar H."/>
            <person name="Chacko J."/>
            <person name="Chan S.N."/>
            <person name="Chavez D."/>
            <person name="Christopoulos C."/>
            <person name="Chu J."/>
            <person name="Cockrell R."/>
            <person name="Cox C.D."/>
            <person name="Dang M."/>
            <person name="Dathorne S.R."/>
            <person name="David R."/>
            <person name="Davis C.M."/>
            <person name="Davy-Carroll L."/>
            <person name="Deshazo D.R."/>
            <person name="Donlin J.E."/>
            <person name="D'Souza L."/>
            <person name="Eaves K.A."/>
            <person name="Egan A."/>
            <person name="Emery-Cohen A.J."/>
            <person name="Escotto M."/>
            <person name="Flagg N."/>
            <person name="Forbes L.D."/>
            <person name="Gabisi A.M."/>
            <person name="Garza M."/>
            <person name="Hamilton C."/>
            <person name="Henderson N."/>
            <person name="Hernandez O."/>
            <person name="Hines S."/>
            <person name="Hogues M.E."/>
            <person name="Huang M."/>
            <person name="Idlebird D.G."/>
            <person name="Johnson R."/>
            <person name="Jolivet A."/>
            <person name="Jones S."/>
            <person name="Kagan R."/>
            <person name="King L.M."/>
            <person name="Leal B."/>
            <person name="Lebow H."/>
            <person name="Lee S."/>
            <person name="LeVan J.M."/>
            <person name="Lewis L.C."/>
            <person name="London P."/>
            <person name="Lorensuhewa L.M."/>
            <person name="Loulseged H."/>
            <person name="Lovett D.A."/>
            <person name="Lucier A."/>
            <person name="Lucier R.L."/>
            <person name="Ma J."/>
            <person name="Madu R.C."/>
            <person name="Mapua P."/>
            <person name="Martindale A.D."/>
            <person name="Martinez E."/>
            <person name="Massey E."/>
            <person name="Mawhiney S."/>
            <person name="Meador M.G."/>
            <person name="Mendez S."/>
            <person name="Mercado C."/>
            <person name="Mercado I.C."/>
            <person name="Merritt C.E."/>
            <person name="Miner Z.L."/>
            <person name="Minja E."/>
            <person name="Mitchell T."/>
            <person name="Mohabbat F."/>
            <person name="Mohabbat K."/>
            <person name="Montgomery B."/>
            <person name="Moore N."/>
            <person name="Morris S."/>
            <person name="Munidasa M."/>
            <person name="Ngo R.N."/>
            <person name="Nguyen N.B."/>
            <person name="Nickerson E."/>
            <person name="Nwaokelemeh O.O."/>
            <person name="Nwokenkwo S."/>
            <person name="Obregon M."/>
            <person name="Oguh M."/>
            <person name="Oragunye N."/>
            <person name="Oviedo R.J."/>
            <person name="Parish B.J."/>
            <person name="Parker D.N."/>
            <person name="Parrish J."/>
            <person name="Parks K.L."/>
            <person name="Paul H.A."/>
            <person name="Payton B.A."/>
            <person name="Perez A."/>
            <person name="Perrin W."/>
            <person name="Pickens A."/>
            <person name="Primus E.L."/>
            <person name="Pu L.-L."/>
            <person name="Puazo M."/>
            <person name="Quiles M.M."/>
            <person name="Quiroz J.B."/>
            <person name="Rabata D."/>
            <person name="Reeves K."/>
            <person name="Ruiz S.J."/>
            <person name="Shao H."/>
            <person name="Sisson I."/>
            <person name="Sonaike T."/>
            <person name="Sorelle R.P."/>
            <person name="Sutton A.E."/>
            <person name="Svatek A.F."/>
            <person name="Svetz L.A."/>
            <person name="Tamerisa K.S."/>
            <person name="Taylor T.R."/>
            <person name="Teague B."/>
            <person name="Thomas N."/>
            <person name="Thorn R.D."/>
            <person name="Trejos Z.Y."/>
            <person name="Trevino B.K."/>
            <person name="Ukegbu O.N."/>
            <person name="Urban J.B."/>
            <person name="Vasquez L.I."/>
            <person name="Vera V.A."/>
            <person name="Villasana D.M."/>
            <person name="Wang L."/>
            <person name="Ward-Moore S."/>
            <person name="Warren J.T."/>
            <person name="Wei X."/>
            <person name="White F."/>
            <person name="Williamson A.L."/>
            <person name="Wleczyk R."/>
            <person name="Wooden H.S."/>
            <person name="Wooden S.H."/>
            <person name="Yen J."/>
            <person name="Yoon L."/>
            <person name="Yoon V."/>
            <person name="Zorrilla S.E."/>
            <person name="Nelson D."/>
            <person name="Kucherlapati R."/>
            <person name="Weinstock G."/>
            <person name="Gibbs R.A."/>
        </authorList>
    </citation>
    <scope>NUCLEOTIDE SEQUENCE [LARGE SCALE GENOMIC DNA]</scope>
</reference>
<reference key="6">
    <citation type="journal article" date="2004" name="Genome Res.">
        <title>The status, quality, and expansion of the NIH full-length cDNA project: the Mammalian Gene Collection (MGC).</title>
        <authorList>
            <consortium name="The MGC Project Team"/>
        </authorList>
    </citation>
    <scope>NUCLEOTIDE SEQUENCE [LARGE SCALE MRNA]</scope>
    <source>
        <tissue>Lung</tissue>
    </source>
</reference>